<evidence type="ECO:0000250" key="1"/>
<evidence type="ECO:0000305" key="2"/>
<geneLocation type="chloroplast"/>
<feature type="chain" id="PRO_0000323327" description="Small ribosomal subunit protein uS3c">
    <location>
        <begin position="1"/>
        <end position="218"/>
    </location>
</feature>
<feature type="domain" description="KH type-2">
    <location>
        <begin position="47"/>
        <end position="118"/>
    </location>
</feature>
<keyword id="KW-0150">Chloroplast</keyword>
<keyword id="KW-0934">Plastid</keyword>
<keyword id="KW-0687">Ribonucleoprotein</keyword>
<keyword id="KW-0689">Ribosomal protein</keyword>
<keyword id="KW-0694">RNA-binding</keyword>
<keyword id="KW-0699">rRNA-binding</keyword>
<gene>
    <name type="primary">rps3</name>
</gene>
<reference key="1">
    <citation type="journal article" date="2007" name="Mol. Phylogenet. Evol.">
        <title>Phylogenetic and evolutionary implications of complete chloroplast genome sequences of four early-diverging angiosperms: Buxus (Buxaceae), Chloranthus (Chloranthaceae), Dioscorea (Dioscoreaceae), and Illicium (Schisandraceae).</title>
        <authorList>
            <person name="Hansen D.R."/>
            <person name="Dastidar S.G."/>
            <person name="Cai Z."/>
            <person name="Penaflor C."/>
            <person name="Kuehl J.V."/>
            <person name="Boore J.L."/>
            <person name="Jansen R.K."/>
        </authorList>
    </citation>
    <scope>NUCLEOTIDE SEQUENCE [LARGE SCALE GENOMIC DNA]</scope>
</reference>
<sequence length="218" mass="24955">MGQKINPLGFRLGTTQSHHCLWFAQPKNYSGGLQEDEKIRDCIKNYVQKHMRVSSGFEGIARIGIQKKIDLIQVIIHIGFPHFLIEGRARGIEELQINVQKKLNSVNRRLNIAITRVAKPYGQPTILAEYIALQLKNRVSFRKAMKKAIELTEQADTKGIQVQISGRINGKEIARVEWIREGRVPLQTIRAKIDHCSYAVRTIYGVLGIKIWIFLDEE</sequence>
<organism>
    <name type="scientific">Illicium oligandrum</name>
    <name type="common">Star anise</name>
    <dbReference type="NCBI Taxonomy" id="145286"/>
    <lineage>
        <taxon>Eukaryota</taxon>
        <taxon>Viridiplantae</taxon>
        <taxon>Streptophyta</taxon>
        <taxon>Embryophyta</taxon>
        <taxon>Tracheophyta</taxon>
        <taxon>Spermatophyta</taxon>
        <taxon>Magnoliopsida</taxon>
        <taxon>Austrobaileyales</taxon>
        <taxon>Schisandraceae</taxon>
        <taxon>Illicium</taxon>
    </lineage>
</organism>
<comment type="subunit">
    <text evidence="1">Part of the 30S ribosomal subunit.</text>
</comment>
<comment type="subcellular location">
    <subcellularLocation>
        <location>Plastid</location>
        <location>Chloroplast</location>
    </subcellularLocation>
</comment>
<comment type="similarity">
    <text evidence="2">Belongs to the universal ribosomal protein uS3 family.</text>
</comment>
<protein>
    <recommendedName>
        <fullName evidence="2">Small ribosomal subunit protein uS3c</fullName>
    </recommendedName>
    <alternativeName>
        <fullName>30S ribosomal protein S3, chloroplastic</fullName>
    </alternativeName>
</protein>
<accession>A6MMY3</accession>
<dbReference type="EMBL" id="EF380354">
    <property type="protein sequence ID" value="ABQ52557.1"/>
    <property type="molecule type" value="Genomic_DNA"/>
</dbReference>
<dbReference type="RefSeq" id="YP_001294309.1">
    <property type="nucleotide sequence ID" value="NC_009600.1"/>
</dbReference>
<dbReference type="SMR" id="A6MMY3"/>
<dbReference type="GeneID" id="5236750"/>
<dbReference type="GO" id="GO:0009507">
    <property type="term" value="C:chloroplast"/>
    <property type="evidence" value="ECO:0007669"/>
    <property type="project" value="UniProtKB-SubCell"/>
</dbReference>
<dbReference type="GO" id="GO:0022627">
    <property type="term" value="C:cytosolic small ribosomal subunit"/>
    <property type="evidence" value="ECO:0007669"/>
    <property type="project" value="TreeGrafter"/>
</dbReference>
<dbReference type="GO" id="GO:0019843">
    <property type="term" value="F:rRNA binding"/>
    <property type="evidence" value="ECO:0007669"/>
    <property type="project" value="UniProtKB-UniRule"/>
</dbReference>
<dbReference type="GO" id="GO:0003735">
    <property type="term" value="F:structural constituent of ribosome"/>
    <property type="evidence" value="ECO:0007669"/>
    <property type="project" value="InterPro"/>
</dbReference>
<dbReference type="GO" id="GO:0006412">
    <property type="term" value="P:translation"/>
    <property type="evidence" value="ECO:0007669"/>
    <property type="project" value="UniProtKB-UniRule"/>
</dbReference>
<dbReference type="CDD" id="cd02412">
    <property type="entry name" value="KH-II_30S_S3"/>
    <property type="match status" value="1"/>
</dbReference>
<dbReference type="FunFam" id="3.30.1140.32:FF:000003">
    <property type="entry name" value="30S ribosomal protein S3, chloroplastic"/>
    <property type="match status" value="1"/>
</dbReference>
<dbReference type="FunFam" id="3.30.300.20:FF:000008">
    <property type="entry name" value="30S ribosomal protein S3, chloroplastic"/>
    <property type="match status" value="1"/>
</dbReference>
<dbReference type="Gene3D" id="3.30.300.20">
    <property type="match status" value="1"/>
</dbReference>
<dbReference type="Gene3D" id="3.30.1140.32">
    <property type="entry name" value="Ribosomal protein S3, C-terminal domain"/>
    <property type="match status" value="1"/>
</dbReference>
<dbReference type="HAMAP" id="MF_01309_B">
    <property type="entry name" value="Ribosomal_uS3_B"/>
    <property type="match status" value="1"/>
</dbReference>
<dbReference type="InterPro" id="IPR015946">
    <property type="entry name" value="KH_dom-like_a/b"/>
</dbReference>
<dbReference type="InterPro" id="IPR004044">
    <property type="entry name" value="KH_dom_type_2"/>
</dbReference>
<dbReference type="InterPro" id="IPR009019">
    <property type="entry name" value="KH_sf_prok-type"/>
</dbReference>
<dbReference type="InterPro" id="IPR036419">
    <property type="entry name" value="Ribosomal_S3_C_sf"/>
</dbReference>
<dbReference type="InterPro" id="IPR005704">
    <property type="entry name" value="Ribosomal_uS3_bac-typ"/>
</dbReference>
<dbReference type="InterPro" id="IPR001351">
    <property type="entry name" value="Ribosomal_uS3_C"/>
</dbReference>
<dbReference type="InterPro" id="IPR018280">
    <property type="entry name" value="Ribosomal_uS3_CS"/>
</dbReference>
<dbReference type="NCBIfam" id="TIGR01009">
    <property type="entry name" value="rpsC_bact"/>
    <property type="match status" value="1"/>
</dbReference>
<dbReference type="PANTHER" id="PTHR11760">
    <property type="entry name" value="30S/40S RIBOSOMAL PROTEIN S3"/>
    <property type="match status" value="1"/>
</dbReference>
<dbReference type="PANTHER" id="PTHR11760:SF19">
    <property type="entry name" value="SMALL RIBOSOMAL SUBUNIT PROTEIN US3C"/>
    <property type="match status" value="1"/>
</dbReference>
<dbReference type="Pfam" id="PF00189">
    <property type="entry name" value="Ribosomal_S3_C"/>
    <property type="match status" value="1"/>
</dbReference>
<dbReference type="SUPFAM" id="SSF54814">
    <property type="entry name" value="Prokaryotic type KH domain (KH-domain type II)"/>
    <property type="match status" value="1"/>
</dbReference>
<dbReference type="SUPFAM" id="SSF54821">
    <property type="entry name" value="Ribosomal protein S3 C-terminal domain"/>
    <property type="match status" value="1"/>
</dbReference>
<dbReference type="PROSITE" id="PS50823">
    <property type="entry name" value="KH_TYPE_2"/>
    <property type="match status" value="1"/>
</dbReference>
<dbReference type="PROSITE" id="PS00548">
    <property type="entry name" value="RIBOSOMAL_S3"/>
    <property type="match status" value="1"/>
</dbReference>
<proteinExistence type="inferred from homology"/>
<name>RR3_ILLOL</name>